<organism>
    <name type="scientific">Xenopus laevis</name>
    <name type="common">African clawed frog</name>
    <dbReference type="NCBI Taxonomy" id="8355"/>
    <lineage>
        <taxon>Eukaryota</taxon>
        <taxon>Metazoa</taxon>
        <taxon>Chordata</taxon>
        <taxon>Craniata</taxon>
        <taxon>Vertebrata</taxon>
        <taxon>Euteleostomi</taxon>
        <taxon>Amphibia</taxon>
        <taxon>Batrachia</taxon>
        <taxon>Anura</taxon>
        <taxon>Pipoidea</taxon>
        <taxon>Pipidae</taxon>
        <taxon>Xenopodinae</taxon>
        <taxon>Xenopus</taxon>
        <taxon>Xenopus</taxon>
    </lineage>
</organism>
<sequence length="486" mass="55452">MRILEIFAILLILKEVRPQTKRSHKVNMKTPFQKRKNHHLNTDSRATLMSPADLHSVEHSIVQIRDPTLIPHYDQKSQEDMKLHFLKNTLVTCNDGTTAGYYLRETKGSKRWIIFLEGGWCCYSKETCGVRYDNVKRLMSSSNWPQTRKGTGILSPRQDENPYWWNVNAVFVPYCSSDVWSGNVSKTQDGYAFMGSVIIQEVIRDLVPRGMKQAKSVILAGSSAGGTGVLINIDRVAALVEETTSESVQVRGLVDSGWFLDSRHSKQSDCLDISKCALTEAIKKGLKLWNGILPENCKQQFKKGDEWRCFYGPRLFTSMKSPIFVVQWLYDQEQLRIENIQTEFQSMTENQWNSIQNIGREFKKSLREVPAVFAPACLSHTLITKSNWLEFQVKSVTLAKALHCWDRSLQENRAPKGVIRGCPFHLVDNCQWPHCNPTCPAIYDATSGQELSILQMFLKLRLESQRRGQEPKGDLGPLMSMLRNSG</sequence>
<keyword id="KW-0325">Glycoprotein</keyword>
<keyword id="KW-0378">Hydrolase</keyword>
<keyword id="KW-1185">Reference proteome</keyword>
<keyword id="KW-0964">Secreted</keyword>
<keyword id="KW-0719">Serine esterase</keyword>
<keyword id="KW-0732">Signal</keyword>
<keyword id="KW-0879">Wnt signaling pathway</keyword>
<feature type="signal peptide" evidence="3">
    <location>
        <begin position="1"/>
        <end position="18"/>
    </location>
</feature>
<feature type="chain" id="PRO_0000433429" description="Palmitoleoyl-protein carboxylesterase notum2" evidence="3">
    <location>
        <begin position="19"/>
        <end position="486"/>
    </location>
</feature>
<feature type="active site" description="Charge relay system" evidence="1">
    <location>
        <position position="223"/>
    </location>
</feature>
<feature type="active site" description="Charge relay system" evidence="1">
    <location>
        <position position="331"/>
    </location>
</feature>
<feature type="active site" description="Charge relay system" evidence="1">
    <location>
        <position position="380"/>
    </location>
</feature>
<feature type="glycosylation site" description="N-linked (GlcNAc...) asparagine" evidence="4">
    <location>
        <position position="183"/>
    </location>
</feature>
<protein>
    <recommendedName>
        <fullName evidence="1">Palmitoleoyl-protein carboxylesterase notum2</fullName>
        <ecNumber evidence="1">3.1.1.98</ecNumber>
    </recommendedName>
</protein>
<evidence type="ECO:0000250" key="1">
    <source>
        <dbReference type="UniProtKB" id="Q6P988"/>
    </source>
</evidence>
<evidence type="ECO:0000250" key="2">
    <source>
        <dbReference type="UniProtKB" id="Q9VUX3"/>
    </source>
</evidence>
<evidence type="ECO:0000255" key="3"/>
<evidence type="ECO:0000255" key="4">
    <source>
        <dbReference type="PROSITE-ProRule" id="PRU00498"/>
    </source>
</evidence>
<evidence type="ECO:0000303" key="5">
    <source>
    </source>
</evidence>
<evidence type="ECO:0000305" key="6"/>
<gene>
    <name evidence="5" type="primary">notum2</name>
</gene>
<dbReference type="EC" id="3.1.1.98" evidence="1"/>
<dbReference type="EMBL" id="KP781857">
    <property type="protein sequence ID" value="AJQ30103.1"/>
    <property type="molecule type" value="mRNA"/>
</dbReference>
<dbReference type="SMR" id="A0A0D3QS97"/>
<dbReference type="GlyCosmos" id="A0A0D3QS97">
    <property type="glycosylation" value="1 site, No reported glycans"/>
</dbReference>
<dbReference type="GeneID" id="108701542"/>
<dbReference type="KEGG" id="xla:108701542"/>
<dbReference type="OrthoDB" id="2015280at2759"/>
<dbReference type="Proteomes" id="UP000186698">
    <property type="component" value="Chromosome 9_10L"/>
</dbReference>
<dbReference type="Bgee" id="108701542">
    <property type="expression patterns" value="Expressed in spleen and 6 other cell types or tissues"/>
</dbReference>
<dbReference type="GO" id="GO:0005576">
    <property type="term" value="C:extracellular region"/>
    <property type="evidence" value="ECO:0007669"/>
    <property type="project" value="UniProtKB-SubCell"/>
</dbReference>
<dbReference type="GO" id="GO:1990699">
    <property type="term" value="F:palmitoleyl hydrolase activity"/>
    <property type="evidence" value="ECO:0000318"/>
    <property type="project" value="GO_Central"/>
</dbReference>
<dbReference type="GO" id="GO:0090090">
    <property type="term" value="P:negative regulation of canonical Wnt signaling pathway"/>
    <property type="evidence" value="ECO:0000318"/>
    <property type="project" value="GO_Central"/>
</dbReference>
<dbReference type="GO" id="GO:0016055">
    <property type="term" value="P:Wnt signaling pathway"/>
    <property type="evidence" value="ECO:0007669"/>
    <property type="project" value="UniProtKB-KW"/>
</dbReference>
<dbReference type="InterPro" id="IPR004963">
    <property type="entry name" value="PAE/NOTUM"/>
</dbReference>
<dbReference type="PANTHER" id="PTHR21562:SF10">
    <property type="entry name" value="CARBOXYLESTERASE NOTUM2"/>
    <property type="match status" value="1"/>
</dbReference>
<dbReference type="PANTHER" id="PTHR21562">
    <property type="entry name" value="NOTUM-RELATED"/>
    <property type="match status" value="1"/>
</dbReference>
<dbReference type="Pfam" id="PF03283">
    <property type="entry name" value="PAE"/>
    <property type="match status" value="1"/>
</dbReference>
<reference key="1">
    <citation type="journal article" date="2015" name="Dev. Cell">
        <title>Notum is required for neural and head induction via Wnt deacylation, oxidation, and inactivation.</title>
        <authorList>
            <person name="Zhang X."/>
            <person name="Cheong S.M."/>
            <person name="Amado N.G."/>
            <person name="Reis A.H."/>
            <person name="MacDonald B.T."/>
            <person name="Zebisch M."/>
            <person name="Jones E.Y."/>
            <person name="Abreu J.G."/>
            <person name="He X."/>
        </authorList>
    </citation>
    <scope>NUCLEOTIDE SEQUENCE [MRNA]</scope>
</reference>
<proteinExistence type="evidence at transcript level"/>
<comment type="function">
    <text evidence="1">Carboxylesterase that acts as a key negative regulator of the Wnt signaling pathway by specifically mediating depalmitoleoylation of WNT proteins. Serine palmitoleoylation of WNT proteins is required for efficient binding to frizzled receptors.</text>
</comment>
<comment type="catalytic activity">
    <reaction evidence="1">
        <text>[Wnt protein]-O-(9Z)-hexadecenoyl-L-serine + H2O = [Wnt protein]-L-serine + (9Z)-hexadecenoate + H(+)</text>
        <dbReference type="Rhea" id="RHEA:45340"/>
        <dbReference type="Rhea" id="RHEA-COMP:11170"/>
        <dbReference type="Rhea" id="RHEA-COMP:11171"/>
        <dbReference type="ChEBI" id="CHEBI:15377"/>
        <dbReference type="ChEBI" id="CHEBI:15378"/>
        <dbReference type="ChEBI" id="CHEBI:29999"/>
        <dbReference type="ChEBI" id="CHEBI:32372"/>
        <dbReference type="ChEBI" id="CHEBI:85189"/>
        <dbReference type="EC" id="3.1.1.98"/>
    </reaction>
</comment>
<comment type="subcellular location">
    <subcellularLocation>
        <location evidence="2">Secreted</location>
    </subcellularLocation>
</comment>
<comment type="similarity">
    <text evidence="6">Belongs to the pectinacetylesterase family. Notum subfamily.</text>
</comment>
<accession>A0A0D3QS97</accession>
<name>NOTU2_XENLA</name>